<gene>
    <name type="primary">Papst2</name>
    <name type="ORF">CG7853</name>
</gene>
<protein>
    <recommendedName>
        <fullName>Adenosine 3'-phospho 5'-phosphosulfate transporter 2</fullName>
    </recommendedName>
    <alternativeName>
        <fullName>PAPS transporter 2</fullName>
    </alternativeName>
    <alternativeName>
        <fullName>Solute carrier family 35 member B3 homolog</fullName>
    </alternativeName>
    <alternativeName>
        <fullName>dPAPST2</fullName>
    </alternativeName>
</protein>
<reference key="1">
    <citation type="journal article" date="2006" name="J. Biol. Chem.">
        <title>Identification and characterization of a novel Drosophila 3'-phosphoadenosine 5'-phosphosulfate transporter.</title>
        <authorList>
            <person name="Goda E."/>
            <person name="Kamiyama S."/>
            <person name="Uno T."/>
            <person name="Yoshida H."/>
            <person name="Ueyama M."/>
            <person name="Kinoshita-Toyoda A."/>
            <person name="Toyoda H."/>
            <person name="Ueda R."/>
            <person name="Nishihara S."/>
        </authorList>
    </citation>
    <scope>NUCLEOTIDE SEQUENCE [MRNA]</scope>
    <scope>FUNCTION</scope>
    <scope>BIOPHYSICOCHEMICAL PROPERTIES</scope>
    <scope>SUBCELLULAR LOCATION</scope>
    <scope>DEVELOPMENTAL STAGE</scope>
    <source>
        <strain>Berkeley</strain>
        <tissue>Embryo</tissue>
    </source>
</reference>
<reference key="2">
    <citation type="journal article" date="2000" name="Science">
        <title>The genome sequence of Drosophila melanogaster.</title>
        <authorList>
            <person name="Adams M.D."/>
            <person name="Celniker S.E."/>
            <person name="Holt R.A."/>
            <person name="Evans C.A."/>
            <person name="Gocayne J.D."/>
            <person name="Amanatides P.G."/>
            <person name="Scherer S.E."/>
            <person name="Li P.W."/>
            <person name="Hoskins R.A."/>
            <person name="Galle R.F."/>
            <person name="George R.A."/>
            <person name="Lewis S.E."/>
            <person name="Richards S."/>
            <person name="Ashburner M."/>
            <person name="Henderson S.N."/>
            <person name="Sutton G.G."/>
            <person name="Wortman J.R."/>
            <person name="Yandell M.D."/>
            <person name="Zhang Q."/>
            <person name="Chen L.X."/>
            <person name="Brandon R.C."/>
            <person name="Rogers Y.-H.C."/>
            <person name="Blazej R.G."/>
            <person name="Champe M."/>
            <person name="Pfeiffer B.D."/>
            <person name="Wan K.H."/>
            <person name="Doyle C."/>
            <person name="Baxter E.G."/>
            <person name="Helt G."/>
            <person name="Nelson C.R."/>
            <person name="Miklos G.L.G."/>
            <person name="Abril J.F."/>
            <person name="Agbayani A."/>
            <person name="An H.-J."/>
            <person name="Andrews-Pfannkoch C."/>
            <person name="Baldwin D."/>
            <person name="Ballew R.M."/>
            <person name="Basu A."/>
            <person name="Baxendale J."/>
            <person name="Bayraktaroglu L."/>
            <person name="Beasley E.M."/>
            <person name="Beeson K.Y."/>
            <person name="Benos P.V."/>
            <person name="Berman B.P."/>
            <person name="Bhandari D."/>
            <person name="Bolshakov S."/>
            <person name="Borkova D."/>
            <person name="Botchan M.R."/>
            <person name="Bouck J."/>
            <person name="Brokstein P."/>
            <person name="Brottier P."/>
            <person name="Burtis K.C."/>
            <person name="Busam D.A."/>
            <person name="Butler H."/>
            <person name="Cadieu E."/>
            <person name="Center A."/>
            <person name="Chandra I."/>
            <person name="Cherry J.M."/>
            <person name="Cawley S."/>
            <person name="Dahlke C."/>
            <person name="Davenport L.B."/>
            <person name="Davies P."/>
            <person name="de Pablos B."/>
            <person name="Delcher A."/>
            <person name="Deng Z."/>
            <person name="Mays A.D."/>
            <person name="Dew I."/>
            <person name="Dietz S.M."/>
            <person name="Dodson K."/>
            <person name="Doup L.E."/>
            <person name="Downes M."/>
            <person name="Dugan-Rocha S."/>
            <person name="Dunkov B.C."/>
            <person name="Dunn P."/>
            <person name="Durbin K.J."/>
            <person name="Evangelista C.C."/>
            <person name="Ferraz C."/>
            <person name="Ferriera S."/>
            <person name="Fleischmann W."/>
            <person name="Fosler C."/>
            <person name="Gabrielian A.E."/>
            <person name="Garg N.S."/>
            <person name="Gelbart W.M."/>
            <person name="Glasser K."/>
            <person name="Glodek A."/>
            <person name="Gong F."/>
            <person name="Gorrell J.H."/>
            <person name="Gu Z."/>
            <person name="Guan P."/>
            <person name="Harris M."/>
            <person name="Harris N.L."/>
            <person name="Harvey D.A."/>
            <person name="Heiman T.J."/>
            <person name="Hernandez J.R."/>
            <person name="Houck J."/>
            <person name="Hostin D."/>
            <person name="Houston K.A."/>
            <person name="Howland T.J."/>
            <person name="Wei M.-H."/>
            <person name="Ibegwam C."/>
            <person name="Jalali M."/>
            <person name="Kalush F."/>
            <person name="Karpen G.H."/>
            <person name="Ke Z."/>
            <person name="Kennison J.A."/>
            <person name="Ketchum K.A."/>
            <person name="Kimmel B.E."/>
            <person name="Kodira C.D."/>
            <person name="Kraft C.L."/>
            <person name="Kravitz S."/>
            <person name="Kulp D."/>
            <person name="Lai Z."/>
            <person name="Lasko P."/>
            <person name="Lei Y."/>
            <person name="Levitsky A.A."/>
            <person name="Li J.H."/>
            <person name="Li Z."/>
            <person name="Liang Y."/>
            <person name="Lin X."/>
            <person name="Liu X."/>
            <person name="Mattei B."/>
            <person name="McIntosh T.C."/>
            <person name="McLeod M.P."/>
            <person name="McPherson D."/>
            <person name="Merkulov G."/>
            <person name="Milshina N.V."/>
            <person name="Mobarry C."/>
            <person name="Morris J."/>
            <person name="Moshrefi A."/>
            <person name="Mount S.M."/>
            <person name="Moy M."/>
            <person name="Murphy B."/>
            <person name="Murphy L."/>
            <person name="Muzny D.M."/>
            <person name="Nelson D.L."/>
            <person name="Nelson D.R."/>
            <person name="Nelson K.A."/>
            <person name="Nixon K."/>
            <person name="Nusskern D.R."/>
            <person name="Pacleb J.M."/>
            <person name="Palazzolo M."/>
            <person name="Pittman G.S."/>
            <person name="Pan S."/>
            <person name="Pollard J."/>
            <person name="Puri V."/>
            <person name="Reese M.G."/>
            <person name="Reinert K."/>
            <person name="Remington K."/>
            <person name="Saunders R.D.C."/>
            <person name="Scheeler F."/>
            <person name="Shen H."/>
            <person name="Shue B.C."/>
            <person name="Siden-Kiamos I."/>
            <person name="Simpson M."/>
            <person name="Skupski M.P."/>
            <person name="Smith T.J."/>
            <person name="Spier E."/>
            <person name="Spradling A.C."/>
            <person name="Stapleton M."/>
            <person name="Strong R."/>
            <person name="Sun E."/>
            <person name="Svirskas R."/>
            <person name="Tector C."/>
            <person name="Turner R."/>
            <person name="Venter E."/>
            <person name="Wang A.H."/>
            <person name="Wang X."/>
            <person name="Wang Z.-Y."/>
            <person name="Wassarman D.A."/>
            <person name="Weinstock G.M."/>
            <person name="Weissenbach J."/>
            <person name="Williams S.M."/>
            <person name="Woodage T."/>
            <person name="Worley K.C."/>
            <person name="Wu D."/>
            <person name="Yang S."/>
            <person name="Yao Q.A."/>
            <person name="Ye J."/>
            <person name="Yeh R.-F."/>
            <person name="Zaveri J.S."/>
            <person name="Zhan M."/>
            <person name="Zhang G."/>
            <person name="Zhao Q."/>
            <person name="Zheng L."/>
            <person name="Zheng X.H."/>
            <person name="Zhong F.N."/>
            <person name="Zhong W."/>
            <person name="Zhou X."/>
            <person name="Zhu S.C."/>
            <person name="Zhu X."/>
            <person name="Smith H.O."/>
            <person name="Gibbs R.A."/>
            <person name="Myers E.W."/>
            <person name="Rubin G.M."/>
            <person name="Venter J.C."/>
        </authorList>
    </citation>
    <scope>NUCLEOTIDE SEQUENCE [LARGE SCALE GENOMIC DNA]</scope>
    <source>
        <strain>Berkeley</strain>
    </source>
</reference>
<reference key="3">
    <citation type="journal article" date="2002" name="Genome Biol.">
        <title>Annotation of the Drosophila melanogaster euchromatic genome: a systematic review.</title>
        <authorList>
            <person name="Misra S."/>
            <person name="Crosby M.A."/>
            <person name="Mungall C.J."/>
            <person name="Matthews B.B."/>
            <person name="Campbell K.S."/>
            <person name="Hradecky P."/>
            <person name="Huang Y."/>
            <person name="Kaminker J.S."/>
            <person name="Millburn G.H."/>
            <person name="Prochnik S.E."/>
            <person name="Smith C.D."/>
            <person name="Tupy J.L."/>
            <person name="Whitfield E.J."/>
            <person name="Bayraktaroglu L."/>
            <person name="Berman B.P."/>
            <person name="Bettencourt B.R."/>
            <person name="Celniker S.E."/>
            <person name="de Grey A.D.N.J."/>
            <person name="Drysdale R.A."/>
            <person name="Harris N.L."/>
            <person name="Richter J."/>
            <person name="Russo S."/>
            <person name="Schroeder A.J."/>
            <person name="Shu S.Q."/>
            <person name="Stapleton M."/>
            <person name="Yamada C."/>
            <person name="Ashburner M."/>
            <person name="Gelbart W.M."/>
            <person name="Rubin G.M."/>
            <person name="Lewis S.E."/>
        </authorList>
    </citation>
    <scope>GENOME REANNOTATION</scope>
    <source>
        <strain>Berkeley</strain>
    </source>
</reference>
<reference key="4">
    <citation type="journal article" date="2002" name="Genome Biol.">
        <title>A Drosophila full-length cDNA resource.</title>
        <authorList>
            <person name="Stapleton M."/>
            <person name="Carlson J.W."/>
            <person name="Brokstein P."/>
            <person name="Yu C."/>
            <person name="Champe M."/>
            <person name="George R.A."/>
            <person name="Guarin H."/>
            <person name="Kronmiller B."/>
            <person name="Pacleb J.M."/>
            <person name="Park S."/>
            <person name="Wan K.H."/>
            <person name="Rubin G.M."/>
            <person name="Celniker S.E."/>
        </authorList>
    </citation>
    <scope>NUCLEOTIDE SEQUENCE [LARGE SCALE MRNA]</scope>
    <source>
        <strain>Berkeley</strain>
        <tissue>Embryo</tissue>
    </source>
</reference>
<reference key="5">
    <citation type="journal article" date="2008" name="J. Proteome Res.">
        <title>Phosphoproteome analysis of Drosophila melanogaster embryos.</title>
        <authorList>
            <person name="Zhai B."/>
            <person name="Villen J."/>
            <person name="Beausoleil S.A."/>
            <person name="Mintseris J."/>
            <person name="Gygi S.P."/>
        </authorList>
    </citation>
    <scope>PHOSPHORYLATION [LARGE SCALE ANALYSIS] AT SER-37 AND SER-40</scope>
    <scope>IDENTIFICATION BY MASS SPECTROMETRY</scope>
    <source>
        <tissue>Embryo</tissue>
    </source>
</reference>
<sequence length="396" mass="43883">MYIDTSASSRMTDNKGSVITINGGESAGNSPPSQRKSSTSESPPELRILCFDLTYYNRTTQFLLSCAGVFFLYILYGYLQELIFTVEGFKPYGWFLTLVQFGYYIGFGLVERRLEGYRISGGSFWNIEPEPRCIPMRTYLILAALTLGTMGLSNSSLGYLNYPTQVIFKCCKLIPVLVGSILIQGKRYGLLDFAAATCMCIGLAWFTLADSQMTPNFNLLGVAMISGALLCDAAIGNVQEKAMREFKAPSSEVVFYSYGLGFVYLFVIMLVTGNFFSGFAFCLEHPVETFGYGFLFSLSGYLGIQFVLALVRSSGAPIAATVTTARKAVTIAFSFVLFSKPFTLQYLWSGLIVVLGIYLNVYSKRNKLTLADVRQRIKQFGAKVARSPSRKFLIEV</sequence>
<keyword id="KW-0217">Developmental protein</keyword>
<keyword id="KW-0325">Glycoprotein</keyword>
<keyword id="KW-0333">Golgi apparatus</keyword>
<keyword id="KW-0472">Membrane</keyword>
<keyword id="KW-0597">Phosphoprotein</keyword>
<keyword id="KW-1185">Reference proteome</keyword>
<keyword id="KW-0812">Transmembrane</keyword>
<keyword id="KW-1133">Transmembrane helix</keyword>
<keyword id="KW-0813">Transport</keyword>
<feature type="chain" id="PRO_0000213384" description="Adenosine 3'-phospho 5'-phosphosulfate transporter 2">
    <location>
        <begin position="1"/>
        <end position="396"/>
    </location>
</feature>
<feature type="transmembrane region" description="Helical" evidence="1">
    <location>
        <begin position="66"/>
        <end position="86"/>
    </location>
</feature>
<feature type="transmembrane region" description="Helical" evidence="1">
    <location>
        <begin position="91"/>
        <end position="111"/>
    </location>
</feature>
<feature type="transmembrane region" description="Helical" evidence="1">
    <location>
        <begin position="140"/>
        <end position="160"/>
    </location>
</feature>
<feature type="transmembrane region" description="Helical" evidence="1">
    <location>
        <begin position="163"/>
        <end position="183"/>
    </location>
</feature>
<feature type="transmembrane region" description="Helical" evidence="1">
    <location>
        <begin position="189"/>
        <end position="209"/>
    </location>
</feature>
<feature type="transmembrane region" description="Helical" evidence="1">
    <location>
        <begin position="216"/>
        <end position="236"/>
    </location>
</feature>
<feature type="transmembrane region" description="Helical" evidence="1">
    <location>
        <begin position="253"/>
        <end position="273"/>
    </location>
</feature>
<feature type="transmembrane region" description="Helical" evidence="1">
    <location>
        <begin position="290"/>
        <end position="310"/>
    </location>
</feature>
<feature type="transmembrane region" description="Helical" evidence="1">
    <location>
        <begin position="318"/>
        <end position="338"/>
    </location>
</feature>
<feature type="transmembrane region" description="Helical" evidence="1">
    <location>
        <begin position="342"/>
        <end position="362"/>
    </location>
</feature>
<feature type="region of interest" description="Disordered" evidence="2">
    <location>
        <begin position="22"/>
        <end position="42"/>
    </location>
</feature>
<feature type="compositionally biased region" description="Polar residues" evidence="2">
    <location>
        <begin position="27"/>
        <end position="42"/>
    </location>
</feature>
<feature type="modified residue" description="Phosphoserine" evidence="4">
    <location>
        <position position="37"/>
    </location>
</feature>
<feature type="modified residue" description="Phosphoserine" evidence="4">
    <location>
        <position position="40"/>
    </location>
</feature>
<feature type="glycosylation site" description="N-linked (GlcNAc...) asparagine" evidence="1">
    <location>
        <position position="57"/>
    </location>
</feature>
<proteinExistence type="evidence at protein level"/>
<organism>
    <name type="scientific">Drosophila melanogaster</name>
    <name type="common">Fruit fly</name>
    <dbReference type="NCBI Taxonomy" id="7227"/>
    <lineage>
        <taxon>Eukaryota</taxon>
        <taxon>Metazoa</taxon>
        <taxon>Ecdysozoa</taxon>
        <taxon>Arthropoda</taxon>
        <taxon>Hexapoda</taxon>
        <taxon>Insecta</taxon>
        <taxon>Pterygota</taxon>
        <taxon>Neoptera</taxon>
        <taxon>Endopterygota</taxon>
        <taxon>Diptera</taxon>
        <taxon>Brachycera</taxon>
        <taxon>Muscomorpha</taxon>
        <taxon>Ephydroidea</taxon>
        <taxon>Drosophilidae</taxon>
        <taxon>Drosophila</taxon>
        <taxon>Sophophora</taxon>
    </lineage>
</organism>
<comment type="function">
    <text evidence="3">Mediates the transport of adenosine 3'-phospho 5'-phosphosulfate (PAPS), from cytosol into Golgi. PAPS is a universal sulfuryl donor for sulfation events that take place in the Golgi. Essential for viability. Involved in glycosaminoglycan synthesis and the subsequent signaling. May be involved in hh and dpp signaling by controlling the sulfation of heparan sulfate (HS).</text>
</comment>
<comment type="biophysicochemical properties">
    <kinetics>
        <KM evidence="3">2.3 uM for PAPS</KM>
    </kinetics>
</comment>
<comment type="subcellular location">
    <subcellularLocation>
        <location evidence="3">Golgi apparatus membrane</location>
        <topology evidence="3">Multi-pass membrane protein</topology>
    </subcellularLocation>
</comment>
<comment type="developmental stage">
    <text evidence="3">Expressed both maternally and zygotically. Also expressed at lower levels later in embryonic development, and in larvae and adults.</text>
</comment>
<comment type="similarity">
    <text evidence="5">Belongs to the nucleotide-sugar transporter family. SLC35B subfamily.</text>
</comment>
<accession>Q9VVD9</accession>
<accession>Q0PCZ5</accession>
<accession>Q8T012</accession>
<name>S35B3_DROME</name>
<dbReference type="EMBL" id="AB242867">
    <property type="protein sequence ID" value="BAF02844.1"/>
    <property type="molecule type" value="mRNA"/>
</dbReference>
<dbReference type="EMBL" id="AE014296">
    <property type="protein sequence ID" value="AAF49373.2"/>
    <property type="molecule type" value="Genomic_DNA"/>
</dbReference>
<dbReference type="EMBL" id="AY069640">
    <property type="protein sequence ID" value="AAL39785.1"/>
    <property type="molecule type" value="mRNA"/>
</dbReference>
<dbReference type="RefSeq" id="NP_648954.1">
    <property type="nucleotide sequence ID" value="NM_140697.4"/>
</dbReference>
<dbReference type="SMR" id="Q9VVD9"/>
<dbReference type="BioGRID" id="65206">
    <property type="interactions" value="1"/>
</dbReference>
<dbReference type="FunCoup" id="Q9VVD9">
    <property type="interactions" value="1183"/>
</dbReference>
<dbReference type="STRING" id="7227.FBpp0075039"/>
<dbReference type="GlyCosmos" id="Q9VVD9">
    <property type="glycosylation" value="1 site, No reported glycans"/>
</dbReference>
<dbReference type="GlyGen" id="Q9VVD9">
    <property type="glycosylation" value="1 site"/>
</dbReference>
<dbReference type="iPTMnet" id="Q9VVD9"/>
<dbReference type="PaxDb" id="7227-FBpp0075039"/>
<dbReference type="DNASU" id="39914"/>
<dbReference type="EnsemblMetazoa" id="FBtr0075279">
    <property type="protein sequence ID" value="FBpp0075039"/>
    <property type="gene ID" value="FBgn0036695"/>
</dbReference>
<dbReference type="GeneID" id="39914"/>
<dbReference type="KEGG" id="dme:Dmel_CG7853"/>
<dbReference type="UCSC" id="CG7853-RA">
    <property type="organism name" value="d. melanogaster"/>
</dbReference>
<dbReference type="AGR" id="FB:FBgn0036695"/>
<dbReference type="CTD" id="39914"/>
<dbReference type="FlyBase" id="FBgn0036695">
    <property type="gene designation" value="Papst2"/>
</dbReference>
<dbReference type="VEuPathDB" id="VectorBase:FBgn0036695"/>
<dbReference type="eggNOG" id="KOG1582">
    <property type="taxonomic scope" value="Eukaryota"/>
</dbReference>
<dbReference type="GeneTree" id="ENSGT00940000157040"/>
<dbReference type="HOGENOM" id="CLU_036019_2_0_1"/>
<dbReference type="InParanoid" id="Q9VVD9"/>
<dbReference type="OMA" id="YNRTTQF"/>
<dbReference type="OrthoDB" id="438495at2759"/>
<dbReference type="PhylomeDB" id="Q9VVD9"/>
<dbReference type="Reactome" id="R-DME-174362">
    <property type="pathway name" value="Transport and synthesis of PAPS"/>
</dbReference>
<dbReference type="Reactome" id="R-DME-727802">
    <property type="pathway name" value="Transport of nucleotide sugars"/>
</dbReference>
<dbReference type="SABIO-RK" id="Q9VVD9"/>
<dbReference type="BioGRID-ORCS" id="39914">
    <property type="hits" value="0 hits in 1 CRISPR screen"/>
</dbReference>
<dbReference type="GenomeRNAi" id="39914"/>
<dbReference type="PRO" id="PR:Q9VVD9"/>
<dbReference type="Proteomes" id="UP000000803">
    <property type="component" value="Chromosome 3L"/>
</dbReference>
<dbReference type="Bgee" id="FBgn0036695">
    <property type="expression patterns" value="Expressed in oviduct (Drosophila) and 61 other cell types or tissues"/>
</dbReference>
<dbReference type="GO" id="GO:0005783">
    <property type="term" value="C:endoplasmic reticulum"/>
    <property type="evidence" value="ECO:0000314"/>
    <property type="project" value="FlyBase"/>
</dbReference>
<dbReference type="GO" id="GO:0005789">
    <property type="term" value="C:endoplasmic reticulum membrane"/>
    <property type="evidence" value="ECO:0000318"/>
    <property type="project" value="GO_Central"/>
</dbReference>
<dbReference type="GO" id="GO:0005794">
    <property type="term" value="C:Golgi apparatus"/>
    <property type="evidence" value="ECO:0000314"/>
    <property type="project" value="UniProtKB"/>
</dbReference>
<dbReference type="GO" id="GO:0000137">
    <property type="term" value="C:Golgi cis cisterna"/>
    <property type="evidence" value="ECO:0000314"/>
    <property type="project" value="FlyBase"/>
</dbReference>
<dbReference type="GO" id="GO:0000139">
    <property type="term" value="C:Golgi membrane"/>
    <property type="evidence" value="ECO:0000318"/>
    <property type="project" value="GO_Central"/>
</dbReference>
<dbReference type="GO" id="GO:0046964">
    <property type="term" value="F:3'-phosphoadenosine 5'-phosphosulfate transmembrane transporter activity"/>
    <property type="evidence" value="ECO:0000314"/>
    <property type="project" value="UniProtKB"/>
</dbReference>
<dbReference type="GO" id="GO:0046963">
    <property type="term" value="P:3'-phosphoadenosine 5'-phosphosulfate transport"/>
    <property type="evidence" value="ECO:0000314"/>
    <property type="project" value="UniProtKB"/>
</dbReference>
<dbReference type="GO" id="GO:0015012">
    <property type="term" value="P:heparan sulfate proteoglycan biosynthetic process"/>
    <property type="evidence" value="ECO:0000315"/>
    <property type="project" value="FlyBase"/>
</dbReference>
<dbReference type="GO" id="GO:0055085">
    <property type="term" value="P:transmembrane transport"/>
    <property type="evidence" value="ECO:0000318"/>
    <property type="project" value="GO_Central"/>
</dbReference>
<dbReference type="InterPro" id="IPR013657">
    <property type="entry name" value="SCL35B1-4/HUT1"/>
</dbReference>
<dbReference type="PANTHER" id="PTHR10778:SF8">
    <property type="entry name" value="ADENOSINE 3'-PHOSPHO 5'-PHOSPHOSULFATE TRANSPORTER 2"/>
    <property type="match status" value="1"/>
</dbReference>
<dbReference type="PANTHER" id="PTHR10778">
    <property type="entry name" value="SOLUTE CARRIER FAMILY 35 MEMBER B"/>
    <property type="match status" value="1"/>
</dbReference>
<dbReference type="Pfam" id="PF08449">
    <property type="entry name" value="UAA"/>
    <property type="match status" value="1"/>
</dbReference>
<evidence type="ECO:0000255" key="1"/>
<evidence type="ECO:0000256" key="2">
    <source>
        <dbReference type="SAM" id="MobiDB-lite"/>
    </source>
</evidence>
<evidence type="ECO:0000269" key="3">
    <source>
    </source>
</evidence>
<evidence type="ECO:0000269" key="4">
    <source>
    </source>
</evidence>
<evidence type="ECO:0000305" key="5"/>